<reference evidence="7" key="1">
    <citation type="journal article" date="2000" name="Science">
        <title>The genome sequence of Drosophila melanogaster.</title>
        <authorList>
            <person name="Adams M.D."/>
            <person name="Celniker S.E."/>
            <person name="Holt R.A."/>
            <person name="Evans C.A."/>
            <person name="Gocayne J.D."/>
            <person name="Amanatides P.G."/>
            <person name="Scherer S.E."/>
            <person name="Li P.W."/>
            <person name="Hoskins R.A."/>
            <person name="Galle R.F."/>
            <person name="George R.A."/>
            <person name="Lewis S.E."/>
            <person name="Richards S."/>
            <person name="Ashburner M."/>
            <person name="Henderson S.N."/>
            <person name="Sutton G.G."/>
            <person name="Wortman J.R."/>
            <person name="Yandell M.D."/>
            <person name="Zhang Q."/>
            <person name="Chen L.X."/>
            <person name="Brandon R.C."/>
            <person name="Rogers Y.-H.C."/>
            <person name="Blazej R.G."/>
            <person name="Champe M."/>
            <person name="Pfeiffer B.D."/>
            <person name="Wan K.H."/>
            <person name="Doyle C."/>
            <person name="Baxter E.G."/>
            <person name="Helt G."/>
            <person name="Nelson C.R."/>
            <person name="Miklos G.L.G."/>
            <person name="Abril J.F."/>
            <person name="Agbayani A."/>
            <person name="An H.-J."/>
            <person name="Andrews-Pfannkoch C."/>
            <person name="Baldwin D."/>
            <person name="Ballew R.M."/>
            <person name="Basu A."/>
            <person name="Baxendale J."/>
            <person name="Bayraktaroglu L."/>
            <person name="Beasley E.M."/>
            <person name="Beeson K.Y."/>
            <person name="Benos P.V."/>
            <person name="Berman B.P."/>
            <person name="Bhandari D."/>
            <person name="Bolshakov S."/>
            <person name="Borkova D."/>
            <person name="Botchan M.R."/>
            <person name="Bouck J."/>
            <person name="Brokstein P."/>
            <person name="Brottier P."/>
            <person name="Burtis K.C."/>
            <person name="Busam D.A."/>
            <person name="Butler H."/>
            <person name="Cadieu E."/>
            <person name="Center A."/>
            <person name="Chandra I."/>
            <person name="Cherry J.M."/>
            <person name="Cawley S."/>
            <person name="Dahlke C."/>
            <person name="Davenport L.B."/>
            <person name="Davies P."/>
            <person name="de Pablos B."/>
            <person name="Delcher A."/>
            <person name="Deng Z."/>
            <person name="Mays A.D."/>
            <person name="Dew I."/>
            <person name="Dietz S.M."/>
            <person name="Dodson K."/>
            <person name="Doup L.E."/>
            <person name="Downes M."/>
            <person name="Dugan-Rocha S."/>
            <person name="Dunkov B.C."/>
            <person name="Dunn P."/>
            <person name="Durbin K.J."/>
            <person name="Evangelista C.C."/>
            <person name="Ferraz C."/>
            <person name="Ferriera S."/>
            <person name="Fleischmann W."/>
            <person name="Fosler C."/>
            <person name="Gabrielian A.E."/>
            <person name="Garg N.S."/>
            <person name="Gelbart W.M."/>
            <person name="Glasser K."/>
            <person name="Glodek A."/>
            <person name="Gong F."/>
            <person name="Gorrell J.H."/>
            <person name="Gu Z."/>
            <person name="Guan P."/>
            <person name="Harris M."/>
            <person name="Harris N.L."/>
            <person name="Harvey D.A."/>
            <person name="Heiman T.J."/>
            <person name="Hernandez J.R."/>
            <person name="Houck J."/>
            <person name="Hostin D."/>
            <person name="Houston K.A."/>
            <person name="Howland T.J."/>
            <person name="Wei M.-H."/>
            <person name="Ibegwam C."/>
            <person name="Jalali M."/>
            <person name="Kalush F."/>
            <person name="Karpen G.H."/>
            <person name="Ke Z."/>
            <person name="Kennison J.A."/>
            <person name="Ketchum K.A."/>
            <person name="Kimmel B.E."/>
            <person name="Kodira C.D."/>
            <person name="Kraft C.L."/>
            <person name="Kravitz S."/>
            <person name="Kulp D."/>
            <person name="Lai Z."/>
            <person name="Lasko P."/>
            <person name="Lei Y."/>
            <person name="Levitsky A.A."/>
            <person name="Li J.H."/>
            <person name="Li Z."/>
            <person name="Liang Y."/>
            <person name="Lin X."/>
            <person name="Liu X."/>
            <person name="Mattei B."/>
            <person name="McIntosh T.C."/>
            <person name="McLeod M.P."/>
            <person name="McPherson D."/>
            <person name="Merkulov G."/>
            <person name="Milshina N.V."/>
            <person name="Mobarry C."/>
            <person name="Morris J."/>
            <person name="Moshrefi A."/>
            <person name="Mount S.M."/>
            <person name="Moy M."/>
            <person name="Murphy B."/>
            <person name="Murphy L."/>
            <person name="Muzny D.M."/>
            <person name="Nelson D.L."/>
            <person name="Nelson D.R."/>
            <person name="Nelson K.A."/>
            <person name="Nixon K."/>
            <person name="Nusskern D.R."/>
            <person name="Pacleb J.M."/>
            <person name="Palazzolo M."/>
            <person name="Pittman G.S."/>
            <person name="Pan S."/>
            <person name="Pollard J."/>
            <person name="Puri V."/>
            <person name="Reese M.G."/>
            <person name="Reinert K."/>
            <person name="Remington K."/>
            <person name="Saunders R.D.C."/>
            <person name="Scheeler F."/>
            <person name="Shen H."/>
            <person name="Shue B.C."/>
            <person name="Siden-Kiamos I."/>
            <person name="Simpson M."/>
            <person name="Skupski M.P."/>
            <person name="Smith T.J."/>
            <person name="Spier E."/>
            <person name="Spradling A.C."/>
            <person name="Stapleton M."/>
            <person name="Strong R."/>
            <person name="Sun E."/>
            <person name="Svirskas R."/>
            <person name="Tector C."/>
            <person name="Turner R."/>
            <person name="Venter E."/>
            <person name="Wang A.H."/>
            <person name="Wang X."/>
            <person name="Wang Z.-Y."/>
            <person name="Wassarman D.A."/>
            <person name="Weinstock G.M."/>
            <person name="Weissenbach J."/>
            <person name="Williams S.M."/>
            <person name="Woodage T."/>
            <person name="Worley K.C."/>
            <person name="Wu D."/>
            <person name="Yang S."/>
            <person name="Yao Q.A."/>
            <person name="Ye J."/>
            <person name="Yeh R.-F."/>
            <person name="Zaveri J.S."/>
            <person name="Zhan M."/>
            <person name="Zhang G."/>
            <person name="Zhao Q."/>
            <person name="Zheng L."/>
            <person name="Zheng X.H."/>
            <person name="Zhong F.N."/>
            <person name="Zhong W."/>
            <person name="Zhou X."/>
            <person name="Zhu S.C."/>
            <person name="Zhu X."/>
            <person name="Smith H.O."/>
            <person name="Gibbs R.A."/>
            <person name="Myers E.W."/>
            <person name="Rubin G.M."/>
            <person name="Venter J.C."/>
        </authorList>
    </citation>
    <scope>NUCLEOTIDE SEQUENCE [LARGE SCALE GENOMIC DNA]</scope>
    <source>
        <strain evidence="3">Berkeley</strain>
    </source>
</reference>
<reference evidence="7" key="2">
    <citation type="journal article" date="2002" name="Genome Biol.">
        <title>Annotation of the Drosophila melanogaster euchromatic genome: a systematic review.</title>
        <authorList>
            <person name="Misra S."/>
            <person name="Crosby M.A."/>
            <person name="Mungall C.J."/>
            <person name="Matthews B.B."/>
            <person name="Campbell K.S."/>
            <person name="Hradecky P."/>
            <person name="Huang Y."/>
            <person name="Kaminker J.S."/>
            <person name="Millburn G.H."/>
            <person name="Prochnik S.E."/>
            <person name="Smith C.D."/>
            <person name="Tupy J.L."/>
            <person name="Whitfield E.J."/>
            <person name="Bayraktaroglu L."/>
            <person name="Berman B.P."/>
            <person name="Bettencourt B.R."/>
            <person name="Celniker S.E."/>
            <person name="de Grey A.D.N.J."/>
            <person name="Drysdale R.A."/>
            <person name="Harris N.L."/>
            <person name="Richter J."/>
            <person name="Russo S."/>
            <person name="Schroeder A.J."/>
            <person name="Shu S.Q."/>
            <person name="Stapleton M."/>
            <person name="Yamada C."/>
            <person name="Ashburner M."/>
            <person name="Gelbart W.M."/>
            <person name="Rubin G.M."/>
            <person name="Lewis S.E."/>
        </authorList>
    </citation>
    <scope>GENOME REANNOTATION</scope>
    <source>
        <strain>Berkeley</strain>
    </source>
</reference>
<reference evidence="7" key="3">
    <citation type="journal article" date="2001" name="Curr. Biol.">
        <title>Spatially restricted expression of candidate taste receptors in the Drosophila gustatory system.</title>
        <authorList>
            <person name="Dunipace L."/>
            <person name="Meister S."/>
            <person name="McNealy C."/>
            <person name="Amrein H."/>
        </authorList>
    </citation>
    <scope>IDENTIFICATION</scope>
</reference>
<reference key="4">
    <citation type="journal article" date="2003" name="Proc. Natl. Acad. Sci. U.S.A.">
        <title>Molecular evolution of the insect chemoreceptor gene superfamily in Drosophila melanogaster.</title>
        <authorList>
            <person name="Robertson H.M."/>
            <person name="Warr C.G."/>
            <person name="Carlson J.R."/>
        </authorList>
    </citation>
    <scope>PREDICTION OF FUNCTION</scope>
</reference>
<reference key="5">
    <citation type="journal article" date="2007" name="Proc. Natl. Acad. Sci. U.S.A.">
        <title>A Drosophila gustatory receptor required for the responses to sucrose, glucose, and maltose identified by mRNA tagging.</title>
        <authorList>
            <person name="Jiao Y."/>
            <person name="Moon S.J."/>
            <person name="Montell C."/>
        </authorList>
    </citation>
    <scope>FUNCTION</scope>
    <scope>TISSUE SPECIFICITY</scope>
</reference>
<reference key="6">
    <citation type="journal article" date="2013" name="Curr. Biol.">
        <title>The molecular basis of sugar sensing in Drosophila larvae.</title>
        <authorList>
            <person name="Mishra D."/>
            <person name="Miyamoto T."/>
            <person name="Rezenom Y.H."/>
            <person name="Broussard A."/>
            <person name="Yavuz A."/>
            <person name="Slone J."/>
            <person name="Russell D.H."/>
            <person name="Amrein H."/>
        </authorList>
    </citation>
    <scope>FUNCTION</scope>
</reference>
<reference key="7">
    <citation type="journal article" date="2013" name="PLoS ONE">
        <title>Identification of a Drosophila glucose receptor using Ca2+ imaging of single chemosensory neurons.</title>
        <authorList>
            <person name="Miyamoto T."/>
            <person name="Chen Y."/>
            <person name="Slone J."/>
            <person name="Amrein H."/>
        </authorList>
    </citation>
    <scope>FUNCTION</scope>
    <scope>TISSUE SPECIFICITY</scope>
</reference>
<feature type="chain" id="PRO_0000216526" description="Gustatory receptor for sugar taste 61a">
    <location>
        <begin position="1"/>
        <end position="436"/>
    </location>
</feature>
<feature type="topological domain" description="Cytoplasmic" evidence="1">
    <location>
        <begin position="1"/>
        <end position="78"/>
    </location>
</feature>
<feature type="transmembrane region" description="Helical; Name=1" evidence="2">
    <location>
        <begin position="79"/>
        <end position="99"/>
    </location>
</feature>
<feature type="topological domain" description="Extracellular" evidence="1">
    <location>
        <begin position="100"/>
        <end position="111"/>
    </location>
</feature>
<feature type="transmembrane region" description="Helical; Name=2" evidence="2">
    <location>
        <begin position="112"/>
        <end position="132"/>
    </location>
</feature>
<feature type="topological domain" description="Cytoplasmic" evidence="1">
    <location>
        <begin position="133"/>
        <end position="164"/>
    </location>
</feature>
<feature type="transmembrane region" description="Helical; Name=3" evidence="2">
    <location>
        <begin position="165"/>
        <end position="185"/>
    </location>
</feature>
<feature type="topological domain" description="Extracellular" evidence="1">
    <location>
        <begin position="186"/>
        <end position="214"/>
    </location>
</feature>
<feature type="transmembrane region" description="Helical; Name=4" evidence="2">
    <location>
        <begin position="215"/>
        <end position="235"/>
    </location>
</feature>
<feature type="topological domain" description="Cytoplasmic" evidence="1">
    <location>
        <begin position="236"/>
        <end position="237"/>
    </location>
</feature>
<feature type="transmembrane region" description="Helical; Name=5" evidence="2">
    <location>
        <begin position="238"/>
        <end position="258"/>
    </location>
</feature>
<feature type="topological domain" description="Extracellular" evidence="1">
    <location>
        <begin position="259"/>
        <end position="304"/>
    </location>
</feature>
<feature type="transmembrane region" description="Helical; Name=6" evidence="2">
    <location>
        <begin position="305"/>
        <end position="325"/>
    </location>
</feature>
<feature type="topological domain" description="Cytoplasmic" evidence="1">
    <location>
        <begin position="326"/>
        <end position="334"/>
    </location>
</feature>
<feature type="transmembrane region" description="Helical; Name=7" evidence="2">
    <location>
        <begin position="335"/>
        <end position="355"/>
    </location>
</feature>
<feature type="topological domain" description="Extracellular" evidence="1">
    <location>
        <begin position="356"/>
        <end position="436"/>
    </location>
</feature>
<feature type="glycosylation site" description="N-linked (GlcNAc...) asparagine" evidence="2">
    <location>
        <position position="201"/>
    </location>
</feature>
<name>GR61A_DROME</name>
<keyword id="KW-1003">Cell membrane</keyword>
<keyword id="KW-0325">Glycoprotein</keyword>
<keyword id="KW-0472">Membrane</keyword>
<keyword id="KW-0675">Receptor</keyword>
<keyword id="KW-1185">Reference proteome</keyword>
<keyword id="KW-0807">Transducer</keyword>
<keyword id="KW-0812">Transmembrane</keyword>
<keyword id="KW-1133">Transmembrane helix</keyword>
<accession>Q9W0M2</accession>
<dbReference type="EMBL" id="AE014296">
    <property type="protein sequence ID" value="AAF47421.2"/>
    <property type="molecule type" value="Genomic_DNA"/>
</dbReference>
<dbReference type="RefSeq" id="NP_001261226.1">
    <property type="nucleotide sequence ID" value="NM_001274297.1"/>
</dbReference>
<dbReference type="RefSeq" id="NP_523877.1">
    <property type="nucleotide sequence ID" value="NM_079153.4"/>
</dbReference>
<dbReference type="SMR" id="Q9W0M2"/>
<dbReference type="BioGRID" id="63653">
    <property type="interactions" value="1"/>
</dbReference>
<dbReference type="FunCoup" id="Q9W0M2">
    <property type="interactions" value="3"/>
</dbReference>
<dbReference type="IntAct" id="Q9W0M2">
    <property type="interactions" value="1"/>
</dbReference>
<dbReference type="STRING" id="7227.FBpp0072482"/>
<dbReference type="GlyCosmos" id="Q9W0M2">
    <property type="glycosylation" value="1 site, No reported glycans"/>
</dbReference>
<dbReference type="GlyGen" id="Q9W0M2">
    <property type="glycosylation" value="1 site"/>
</dbReference>
<dbReference type="PaxDb" id="7227-FBpp0072482"/>
<dbReference type="EnsemblMetazoa" id="FBtr0072585">
    <property type="protein sequence ID" value="FBpp0072482"/>
    <property type="gene ID" value="FBgn0035167"/>
</dbReference>
<dbReference type="EnsemblMetazoa" id="FBtr0331401">
    <property type="protein sequence ID" value="FBpp0303818"/>
    <property type="gene ID" value="FBgn0035167"/>
</dbReference>
<dbReference type="GeneID" id="38098"/>
<dbReference type="KEGG" id="dme:Dmel_CG13888"/>
<dbReference type="AGR" id="FB:FBgn0035167"/>
<dbReference type="CTD" id="38098"/>
<dbReference type="FlyBase" id="FBgn0035167">
    <property type="gene designation" value="Gr61a"/>
</dbReference>
<dbReference type="VEuPathDB" id="VectorBase:FBgn0035167"/>
<dbReference type="eggNOG" id="ENOG502QTKP">
    <property type="taxonomic scope" value="Eukaryota"/>
</dbReference>
<dbReference type="GeneTree" id="ENSGT00530000064347"/>
<dbReference type="HOGENOM" id="CLU_043581_1_0_1"/>
<dbReference type="InParanoid" id="Q9W0M2"/>
<dbReference type="OMA" id="HRAIRPY"/>
<dbReference type="OrthoDB" id="5800391at2759"/>
<dbReference type="PhylomeDB" id="Q9W0M2"/>
<dbReference type="BioGRID-ORCS" id="38098">
    <property type="hits" value="0 hits in 1 CRISPR screen"/>
</dbReference>
<dbReference type="GenomeRNAi" id="38098"/>
<dbReference type="PRO" id="PR:Q9W0M2"/>
<dbReference type="Proteomes" id="UP000000803">
    <property type="component" value="Chromosome 3L"/>
</dbReference>
<dbReference type="Bgee" id="FBgn0035167">
    <property type="expression patterns" value="Expressed in gustatory receptor neuron (Drosophila) in insect leg and 6 other cell types or tissues"/>
</dbReference>
<dbReference type="ExpressionAtlas" id="Q9W0M2">
    <property type="expression patterns" value="baseline and differential"/>
</dbReference>
<dbReference type="GO" id="GO:0016020">
    <property type="term" value="C:membrane"/>
    <property type="evidence" value="ECO:0000303"/>
    <property type="project" value="UniProtKB"/>
</dbReference>
<dbReference type="GO" id="GO:0005886">
    <property type="term" value="C:plasma membrane"/>
    <property type="evidence" value="ECO:0000250"/>
    <property type="project" value="FlyBase"/>
</dbReference>
<dbReference type="GO" id="GO:0170023">
    <property type="term" value="F:ionotropic sweet taste receptor activity"/>
    <property type="evidence" value="ECO:0000315"/>
    <property type="project" value="FlyBase"/>
</dbReference>
<dbReference type="GO" id="GO:0015276">
    <property type="term" value="F:ligand-gated monoatomic ion channel activity"/>
    <property type="evidence" value="ECO:0000250"/>
    <property type="project" value="FlyBase"/>
</dbReference>
<dbReference type="GO" id="GO:0033041">
    <property type="term" value="F:sweet taste receptor activity"/>
    <property type="evidence" value="ECO:0000318"/>
    <property type="project" value="GO_Central"/>
</dbReference>
<dbReference type="GO" id="GO:0008527">
    <property type="term" value="F:taste receptor activity"/>
    <property type="evidence" value="ECO:0000303"/>
    <property type="project" value="UniProtKB"/>
</dbReference>
<dbReference type="GO" id="GO:0034220">
    <property type="term" value="P:monoatomic ion transmembrane transport"/>
    <property type="evidence" value="ECO:0000250"/>
    <property type="project" value="FlyBase"/>
</dbReference>
<dbReference type="GO" id="GO:0050916">
    <property type="term" value="P:sensory perception of sweet taste"/>
    <property type="evidence" value="ECO:0000315"/>
    <property type="project" value="FlyBase"/>
</dbReference>
<dbReference type="GO" id="GO:0050909">
    <property type="term" value="P:sensory perception of taste"/>
    <property type="evidence" value="ECO:0000303"/>
    <property type="project" value="UniProtKB"/>
</dbReference>
<dbReference type="GO" id="GO:0007165">
    <property type="term" value="P:signal transduction"/>
    <property type="evidence" value="ECO:0007669"/>
    <property type="project" value="UniProtKB-KW"/>
</dbReference>
<dbReference type="InterPro" id="IPR009318">
    <property type="entry name" value="Gustatory_rcpt"/>
</dbReference>
<dbReference type="PANTHER" id="PTHR21421">
    <property type="entry name" value="GUSTATORY RECEPTOR"/>
    <property type="match status" value="1"/>
</dbReference>
<dbReference type="PANTHER" id="PTHR21421:SF34">
    <property type="entry name" value="GUSTATORY RECEPTOR FOR SUGAR TASTE 61A-RELATED"/>
    <property type="match status" value="1"/>
</dbReference>
<dbReference type="Pfam" id="PF06151">
    <property type="entry name" value="Trehalose_recp"/>
    <property type="match status" value="1"/>
</dbReference>
<dbReference type="PIRSF" id="PIRSF038981">
    <property type="entry name" value="GRP"/>
    <property type="match status" value="1"/>
</dbReference>
<proteinExistence type="evidence at transcript level"/>
<comment type="function">
    <text evidence="4 5 6">One of the few identified sugar gustatory receptors identified so far with glucose being its primary ligand and which mediates acceptance behavior.</text>
</comment>
<comment type="subcellular location">
    <subcellularLocation>
        <location evidence="1">Cell membrane</location>
        <topology evidence="1">Multi-pass membrane protein</topology>
    </subcellularLocation>
</comment>
<comment type="tissue specificity">
    <text evidence="4 5">Expressed in sweet sensing neurons of classical chemosensory sensilla, but also in two supersensitive neurons of atypical taste sensilla.</text>
</comment>
<comment type="similarity">
    <text evidence="7">Belongs to the insect chemoreceptor superfamily. Gustatory receptor (GR) family. Gr5a subfamily.</text>
</comment>
<organism evidence="8">
    <name type="scientific">Drosophila melanogaster</name>
    <name type="common">Fruit fly</name>
    <dbReference type="NCBI Taxonomy" id="7227"/>
    <lineage>
        <taxon>Eukaryota</taxon>
        <taxon>Metazoa</taxon>
        <taxon>Ecdysozoa</taxon>
        <taxon>Arthropoda</taxon>
        <taxon>Hexapoda</taxon>
        <taxon>Insecta</taxon>
        <taxon>Pterygota</taxon>
        <taxon>Neoptera</taxon>
        <taxon>Endopterygota</taxon>
        <taxon>Diptera</taxon>
        <taxon>Brachycera</taxon>
        <taxon>Muscomorpha</taxon>
        <taxon>Ephydroidea</taxon>
        <taxon>Drosophilidae</taxon>
        <taxon>Drosophila</taxon>
        <taxon>Sophophora</taxon>
    </lineage>
</organism>
<sequence length="436" mass="49920">MSRTSDDIRKHLKVRRQKQRAILAMRWRCAQGGLEFEQLDTFYGAIRPYLCVAQFFGIMPLSNIRSRDPQDVKFKVRSIGLAVTGLFLLLGGMKTLVGANILFTEGLNAKNIVGLVFLIVGMVNWLNFVGFARSWSHIMLPWSSVDILMLFPPYKRGKRSLRSKVNVLALSVVVLAVGDHMLYYASGYCSYSMHILQCHTNHSRITFGLYLEKEFSDIMFIMPFNIFSMCYGFWLNGAFTFLWNFMDIFIVMTSIGLAQRFQQFAARVGALEGRHVPEALWYDIRRDHIRLCELASLVEASMSNIVFVSCANNVYVICNQALAIFTKLRHPINYVYFWYSLIFLLARTSLVFMTASKIHDASLLPLRSLYLVPSDGWTQEVQRFADQLTSEFVGLSGYRLFCLTRKSLFGMLATLVTYELMLLQIDAKSHKGLRCA</sequence>
<evidence type="ECO:0000250" key="1"/>
<evidence type="ECO:0000255" key="2"/>
<evidence type="ECO:0000269" key="3">
    <source>
    </source>
</evidence>
<evidence type="ECO:0000269" key="4">
    <source>
    </source>
</evidence>
<evidence type="ECO:0000269" key="5">
    <source>
    </source>
</evidence>
<evidence type="ECO:0000269" key="6">
    <source>
    </source>
</evidence>
<evidence type="ECO:0000305" key="7"/>
<evidence type="ECO:0000312" key="8">
    <source>
        <dbReference type="EMBL" id="AAF47421.2"/>
    </source>
</evidence>
<gene>
    <name type="primary">Gr61a</name>
    <name type="ORF">CG13888</name>
</gene>
<protein>
    <recommendedName>
        <fullName>Gustatory receptor for sugar taste 61a</fullName>
    </recommendedName>
</protein>